<feature type="chain" id="PRO_0000388320" description="UPF0754 membrane protein SERP1382">
    <location>
        <begin position="1"/>
        <end position="376"/>
    </location>
</feature>
<feature type="transmembrane region" description="Helical" evidence="2">
    <location>
        <begin position="4"/>
        <end position="24"/>
    </location>
</feature>
<feature type="transmembrane region" description="Helical" evidence="2">
    <location>
        <begin position="356"/>
        <end position="376"/>
    </location>
</feature>
<proteinExistence type="inferred from homology"/>
<accession>Q5HN90</accession>
<sequence length="376" mass="44317">MHTILLVVFMIILGAIIGGVTNMIAIKMLFHPFKPYYIFRFRIPFTPGLIPKRREEIARKIGQVIEEHLITEELIRQKLNQPQSRNMIQQLIHKQISKLKNDDVTIKKIAGFLGIDVNELVDYKLTTKFLNKLNFWYESNKYRKLSEILPQSFLDQCKGQIEYITDFLCERARNYLSSEKGERDIYELLDTFFNEKGRIIGLLQMFMTKESIADRIQHELIRLTQHPQSQKIITKVLNDEYETFKDKNLDEIIKEQQFKNYSQLVLNELKTYLNLKDKTERPIKQVVPQFIQFLEDDTSKRMTDFIIKGTSKHLTNIMKKINLRQLVEEQINTFDLKYIENLIIDIANKELKLIMTLGFILGGIIGFFQGVIAIFV</sequence>
<gene>
    <name type="ordered locus">SERP1382</name>
</gene>
<reference key="1">
    <citation type="journal article" date="2005" name="J. Bacteriol.">
        <title>Insights on evolution of virulence and resistance from the complete genome analysis of an early methicillin-resistant Staphylococcus aureus strain and a biofilm-producing methicillin-resistant Staphylococcus epidermidis strain.</title>
        <authorList>
            <person name="Gill S.R."/>
            <person name="Fouts D.E."/>
            <person name="Archer G.L."/>
            <person name="Mongodin E.F."/>
            <person name="DeBoy R.T."/>
            <person name="Ravel J."/>
            <person name="Paulsen I.T."/>
            <person name="Kolonay J.F."/>
            <person name="Brinkac L.M."/>
            <person name="Beanan M.J."/>
            <person name="Dodson R.J."/>
            <person name="Daugherty S.C."/>
            <person name="Madupu R."/>
            <person name="Angiuoli S.V."/>
            <person name="Durkin A.S."/>
            <person name="Haft D.H."/>
            <person name="Vamathevan J.J."/>
            <person name="Khouri H."/>
            <person name="Utterback T.R."/>
            <person name="Lee C."/>
            <person name="Dimitrov G."/>
            <person name="Jiang L."/>
            <person name="Qin H."/>
            <person name="Weidman J."/>
            <person name="Tran K."/>
            <person name="Kang K.H."/>
            <person name="Hance I.R."/>
            <person name="Nelson K.E."/>
            <person name="Fraser C.M."/>
        </authorList>
    </citation>
    <scope>NUCLEOTIDE SEQUENCE [LARGE SCALE GENOMIC DNA]</scope>
    <source>
        <strain>ATCC 35984 / DSM 28319 / BCRC 17069 / CCUG 31568 / BM 3577 / RP62A</strain>
    </source>
</reference>
<dbReference type="EMBL" id="CP000029">
    <property type="protein sequence ID" value="AAW54767.1"/>
    <property type="molecule type" value="Genomic_DNA"/>
</dbReference>
<dbReference type="RefSeq" id="WP_010959200.1">
    <property type="nucleotide sequence ID" value="NC_002976.3"/>
</dbReference>
<dbReference type="SMR" id="Q5HN90"/>
<dbReference type="STRING" id="176279.SERP1382"/>
<dbReference type="KEGG" id="ser:SERP1382"/>
<dbReference type="eggNOG" id="COG4399">
    <property type="taxonomic scope" value="Bacteria"/>
</dbReference>
<dbReference type="HOGENOM" id="CLU_042384_0_0_9"/>
<dbReference type="Proteomes" id="UP000000531">
    <property type="component" value="Chromosome"/>
</dbReference>
<dbReference type="GO" id="GO:0005886">
    <property type="term" value="C:plasma membrane"/>
    <property type="evidence" value="ECO:0007669"/>
    <property type="project" value="UniProtKB-SubCell"/>
</dbReference>
<dbReference type="InterPro" id="IPR007383">
    <property type="entry name" value="DUF445"/>
</dbReference>
<dbReference type="InterPro" id="IPR016991">
    <property type="entry name" value="UCP032178"/>
</dbReference>
<dbReference type="PANTHER" id="PTHR35791">
    <property type="entry name" value="UPF0754 MEMBRANE PROTEIN YHEB"/>
    <property type="match status" value="1"/>
</dbReference>
<dbReference type="PANTHER" id="PTHR35791:SF1">
    <property type="entry name" value="UPF0754 MEMBRANE PROTEIN YHEB"/>
    <property type="match status" value="1"/>
</dbReference>
<dbReference type="Pfam" id="PF04286">
    <property type="entry name" value="DUF445"/>
    <property type="match status" value="1"/>
</dbReference>
<dbReference type="PIRSF" id="PIRSF032178">
    <property type="entry name" value="UCP032178"/>
    <property type="match status" value="1"/>
</dbReference>
<name>Y1382_STAEQ</name>
<protein>
    <recommendedName>
        <fullName>UPF0754 membrane protein SERP1382</fullName>
    </recommendedName>
</protein>
<comment type="subcellular location">
    <subcellularLocation>
        <location evidence="1">Cell membrane</location>
        <topology evidence="1">Multi-pass membrane protein</topology>
    </subcellularLocation>
</comment>
<comment type="similarity">
    <text evidence="3">Belongs to the UPF0754 family.</text>
</comment>
<keyword id="KW-1003">Cell membrane</keyword>
<keyword id="KW-0472">Membrane</keyword>
<keyword id="KW-1185">Reference proteome</keyword>
<keyword id="KW-0812">Transmembrane</keyword>
<keyword id="KW-1133">Transmembrane helix</keyword>
<organism>
    <name type="scientific">Staphylococcus epidermidis (strain ATCC 35984 / DSM 28319 / BCRC 17069 / CCUG 31568 / BM 3577 / RP62A)</name>
    <dbReference type="NCBI Taxonomy" id="176279"/>
    <lineage>
        <taxon>Bacteria</taxon>
        <taxon>Bacillati</taxon>
        <taxon>Bacillota</taxon>
        <taxon>Bacilli</taxon>
        <taxon>Bacillales</taxon>
        <taxon>Staphylococcaceae</taxon>
        <taxon>Staphylococcus</taxon>
    </lineage>
</organism>
<evidence type="ECO:0000250" key="1"/>
<evidence type="ECO:0000255" key="2"/>
<evidence type="ECO:0000305" key="3"/>